<protein>
    <recommendedName>
        <fullName>E3 UFM1-protein ligase 1 homolog</fullName>
        <ecNumber>2.3.2.-</ecNumber>
    </recommendedName>
    <alternativeName>
        <fullName evidence="3">E3 UFM1-protein transferase 1 homolog</fullName>
    </alternativeName>
</protein>
<accession>B4JV25</accession>
<comment type="function">
    <text evidence="1">E3 UFM1-protein ligase that mediates ufmylation of target proteins.</text>
</comment>
<comment type="similarity">
    <text evidence="3">Belongs to the UFL1 family.</text>
</comment>
<proteinExistence type="inferred from homology"/>
<organism>
    <name type="scientific">Drosophila grimshawi</name>
    <name type="common">Hawaiian fruit fly</name>
    <name type="synonym">Idiomyia grimshawi</name>
    <dbReference type="NCBI Taxonomy" id="7222"/>
    <lineage>
        <taxon>Eukaryota</taxon>
        <taxon>Metazoa</taxon>
        <taxon>Ecdysozoa</taxon>
        <taxon>Arthropoda</taxon>
        <taxon>Hexapoda</taxon>
        <taxon>Insecta</taxon>
        <taxon>Pterygota</taxon>
        <taxon>Neoptera</taxon>
        <taxon>Endopterygota</taxon>
        <taxon>Diptera</taxon>
        <taxon>Brachycera</taxon>
        <taxon>Muscomorpha</taxon>
        <taxon>Ephydroidea</taxon>
        <taxon>Drosophilidae</taxon>
        <taxon>Drosophila</taxon>
        <taxon>Hawaiian Drosophila</taxon>
    </lineage>
</organism>
<dbReference type="EC" id="2.3.2.-"/>
<dbReference type="EMBL" id="CH916374">
    <property type="protein sequence ID" value="EDV91345.1"/>
    <property type="molecule type" value="Genomic_DNA"/>
</dbReference>
<dbReference type="SMR" id="B4JV25"/>
<dbReference type="FunCoup" id="B4JV25">
    <property type="interactions" value="2501"/>
</dbReference>
<dbReference type="STRING" id="7222.B4JV25"/>
<dbReference type="EnsemblMetazoa" id="FBtr0152802">
    <property type="protein sequence ID" value="FBpp0151294"/>
    <property type="gene ID" value="FBgn0124858"/>
</dbReference>
<dbReference type="EnsemblMetazoa" id="XM_001994680.2">
    <property type="protein sequence ID" value="XP_001994716.1"/>
    <property type="gene ID" value="LOC6568384"/>
</dbReference>
<dbReference type="GeneID" id="6568384"/>
<dbReference type="KEGG" id="dgr:6568384"/>
<dbReference type="CTD" id="23376"/>
<dbReference type="eggNOG" id="KOG2235">
    <property type="taxonomic scope" value="Eukaryota"/>
</dbReference>
<dbReference type="HOGENOM" id="CLU_012417_1_1_1"/>
<dbReference type="InParanoid" id="B4JV25"/>
<dbReference type="OMA" id="CILHASG"/>
<dbReference type="OrthoDB" id="10258297at2759"/>
<dbReference type="PhylomeDB" id="B4JV25"/>
<dbReference type="Proteomes" id="UP000001070">
    <property type="component" value="Unassembled WGS sequence"/>
</dbReference>
<dbReference type="GO" id="GO:0005789">
    <property type="term" value="C:endoplasmic reticulum membrane"/>
    <property type="evidence" value="ECO:0007669"/>
    <property type="project" value="TreeGrafter"/>
</dbReference>
<dbReference type="GO" id="GO:0061666">
    <property type="term" value="F:UFM1 ligase activity"/>
    <property type="evidence" value="ECO:0007669"/>
    <property type="project" value="EnsemblMetazoa"/>
</dbReference>
<dbReference type="GO" id="GO:1990592">
    <property type="term" value="P:protein K69-linked ufmylation"/>
    <property type="evidence" value="ECO:0007669"/>
    <property type="project" value="TreeGrafter"/>
</dbReference>
<dbReference type="GO" id="GO:0032434">
    <property type="term" value="P:regulation of proteasomal ubiquitin-dependent protein catabolic process"/>
    <property type="evidence" value="ECO:0007669"/>
    <property type="project" value="TreeGrafter"/>
</dbReference>
<dbReference type="GO" id="GO:0034976">
    <property type="term" value="P:response to endoplasmic reticulum stress"/>
    <property type="evidence" value="ECO:0007669"/>
    <property type="project" value="TreeGrafter"/>
</dbReference>
<dbReference type="InterPro" id="IPR018611">
    <property type="entry name" value="Ufl1"/>
</dbReference>
<dbReference type="InterPro" id="IPR056761">
    <property type="entry name" value="Ufl1-like_C"/>
</dbReference>
<dbReference type="InterPro" id="IPR056580">
    <property type="entry name" value="Ufl1_dom"/>
</dbReference>
<dbReference type="InterPro" id="IPR056579">
    <property type="entry name" value="Ufl1_N"/>
</dbReference>
<dbReference type="PANTHER" id="PTHR31057">
    <property type="entry name" value="E3 UFM1-PROTEIN LIGASE 1"/>
    <property type="match status" value="1"/>
</dbReference>
<dbReference type="PANTHER" id="PTHR31057:SF0">
    <property type="entry name" value="E3 UFM1-PROTEIN LIGASE 1"/>
    <property type="match status" value="1"/>
</dbReference>
<dbReference type="Pfam" id="PF09743">
    <property type="entry name" value="E3_UFM1_ligase"/>
    <property type="match status" value="1"/>
</dbReference>
<dbReference type="Pfam" id="PF23659">
    <property type="entry name" value="UFL1"/>
    <property type="match status" value="1"/>
</dbReference>
<dbReference type="Pfam" id="PF25041">
    <property type="entry name" value="UFL1_C"/>
    <property type="match status" value="1"/>
</dbReference>
<reference key="1">
    <citation type="journal article" date="2007" name="Nature">
        <title>Evolution of genes and genomes on the Drosophila phylogeny.</title>
        <authorList>
            <consortium name="Drosophila 12 genomes consortium"/>
        </authorList>
    </citation>
    <scope>NUCLEOTIDE SEQUENCE [LARGE SCALE GENOMIC DNA]</scope>
    <source>
        <strain>Tucson 15287-2541.00</strain>
    </source>
</reference>
<evidence type="ECO:0000250" key="1">
    <source>
        <dbReference type="UniProtKB" id="O94874"/>
    </source>
</evidence>
<evidence type="ECO:0000256" key="2">
    <source>
        <dbReference type="SAM" id="MobiDB-lite"/>
    </source>
</evidence>
<evidence type="ECO:0000305" key="3"/>
<gene>
    <name type="ORF">GH17388</name>
</gene>
<name>UFL1_DROGR</name>
<keyword id="KW-1185">Reference proteome</keyword>
<keyword id="KW-0808">Transferase</keyword>
<keyword id="KW-0833">Ubl conjugation pathway</keyword>
<sequence length="783" mass="87899">MSSDWDEIKRLAADFQKAQLTSTLQKLSERNCIEIVTLLLEKQLLDVVFTNDGKEYITPEHLEREIQDELYANGGRANLVEVSKTLNVDLSRIEKLAERIAADDPQIHLMLGQLIDEEYITHIAQEINEKLSQRGEISISDLTSQFDLPSDFLQHQVVEKHLGKLIKGRQDASNPRVFFTQAYIQRCKAKIRGALAAITKPTNVSVILQQISVQEKIFHSLLDEINPAGHVTSKQANAQYVPHIYAKTQADWVNSFYKQNSFLEYDAINKLGISDAKSYIRKQFPNEEFLFLKRVALGARLIELTVVASLNECSATKQYLDLSTILPSNLSEEDIEEAFNAVMAQKHCNPSQFVYLESIVFSQAYLTQLVQPCQEMAQSLAKTAIDNGVYQQYIVEKTLAQKAGNTLGTTHDADEDSKLDKRDERRKKATSGKAGGGSQGRETKTKSTKKHQRGRAAHNHDSDDEEDAVQQSANSSRKSVKSLELVKISDITNLIKGTLEEEGLEHLAKPVASLYLNQLNQMALAKAQELYEAAPQTNRRQTHAAIQERVNTLLVDIRLYEKGLKLFNGDTQTQLVKYLLKSLGNDICNELTLYVAAECSLMVKSTNLNVDQRVKLVQECDAQYRNALLEQNKALNKSIEEFEVATEAVLKACSMIIKKVDKKKDRQLIVGHKEKLLQQLLECQEPALLLHLAALILFTTITGCILHASGKFVSSILQHIRSTLNEPQNALLLRYHDLVLQVLQQTSPDSAESKSVNEQLQALQGEVMDLAQNYSRASVSKAD</sequence>
<feature type="chain" id="PRO_0000391881" description="E3 UFM1-protein ligase 1 homolog">
    <location>
        <begin position="1"/>
        <end position="783"/>
    </location>
</feature>
<feature type="region of interest" description="Disordered" evidence="2">
    <location>
        <begin position="406"/>
        <end position="476"/>
    </location>
</feature>
<feature type="compositionally biased region" description="Basic residues" evidence="2">
    <location>
        <begin position="446"/>
        <end position="457"/>
    </location>
</feature>